<keyword id="KW-0046">Antibiotic resistance</keyword>
<keyword id="KW-0067">ATP-binding</keyword>
<keyword id="KW-0547">Nucleotide-binding</keyword>
<keyword id="KW-0614">Plasmid</keyword>
<keyword id="KW-0813">Transport</keyword>
<sequence>MTIPLLEINSLSFSYKVNLPPVFNNLSLKIEQGELIGLLGENPAGKTTLFNLIRGGVSNYEGTLKRNFSGGELVSLPQVINLSGTLRNEEVLDLICCFNKLTKKQAWTDVNHKWNDNFFIRYDKIRRKRTYTVSYGEKRWLIISLMVTLCKNARLFLLDEPTVGIDIQYRMMLWELINKITADGKTVFFSTHIFDELTRDKIPFYMLSKNSINRYSDMSDFIQSNNETTQKRHLLKKLWEQETDTWI</sequence>
<comment type="function">
    <text>Together with two further proteins McbE and McbG this protein causes immunity to the peptide antibiotic microcin B17, which inhibits DNA replication in enterobacteriaceae. Immunity is determined by two different mechanisms. McbE is involved in the production of extracellular MccB17 and, in a complex with mcbf it also serves as 'pump' for the export of active MccB17 from the cytoplasm to the periplasmic space.</text>
</comment>
<comment type="similarity">
    <text evidence="2">Belongs to the ABC transporter superfamily.</text>
</comment>
<geneLocation type="plasmid">
    <name>IncFII pMccB17</name>
</geneLocation>
<dbReference type="EMBL" id="X07875">
    <property type="protein sequence ID" value="CAA30723.1"/>
    <property type="molecule type" value="Genomic_DNA"/>
</dbReference>
<dbReference type="PIR" id="S01228">
    <property type="entry name" value="BVECMF"/>
</dbReference>
<dbReference type="SMR" id="P05529"/>
<dbReference type="TCDB" id="3.A.1.116.1">
    <property type="family name" value="the atp-binding cassette (abc) superfamily"/>
</dbReference>
<dbReference type="BioCyc" id="MetaCyc:MONOMER-21090"/>
<dbReference type="GO" id="GO:0005524">
    <property type="term" value="F:ATP binding"/>
    <property type="evidence" value="ECO:0007669"/>
    <property type="project" value="UniProtKB-KW"/>
</dbReference>
<dbReference type="GO" id="GO:0016887">
    <property type="term" value="F:ATP hydrolysis activity"/>
    <property type="evidence" value="ECO:0007669"/>
    <property type="project" value="InterPro"/>
</dbReference>
<dbReference type="GO" id="GO:0046677">
    <property type="term" value="P:response to antibiotic"/>
    <property type="evidence" value="ECO:0007669"/>
    <property type="project" value="UniProtKB-KW"/>
</dbReference>
<dbReference type="CDD" id="cd03230">
    <property type="entry name" value="ABC_DR_subfamily_A"/>
    <property type="match status" value="1"/>
</dbReference>
<dbReference type="Gene3D" id="3.40.50.300">
    <property type="entry name" value="P-loop containing nucleotide triphosphate hydrolases"/>
    <property type="match status" value="1"/>
</dbReference>
<dbReference type="InterPro" id="IPR003439">
    <property type="entry name" value="ABC_transporter-like_ATP-bd"/>
</dbReference>
<dbReference type="InterPro" id="IPR051782">
    <property type="entry name" value="ABC_Transporter_VariousFunc"/>
</dbReference>
<dbReference type="InterPro" id="IPR027417">
    <property type="entry name" value="P-loop_NTPase"/>
</dbReference>
<dbReference type="PANTHER" id="PTHR42939">
    <property type="entry name" value="ABC TRANSPORTER ATP-BINDING PROTEIN ALBC-RELATED"/>
    <property type="match status" value="1"/>
</dbReference>
<dbReference type="PANTHER" id="PTHR42939:SF1">
    <property type="entry name" value="ABC TRANSPORTER ATP-BINDING PROTEIN ALBC-RELATED"/>
    <property type="match status" value="1"/>
</dbReference>
<dbReference type="Pfam" id="PF00005">
    <property type="entry name" value="ABC_tran"/>
    <property type="match status" value="1"/>
</dbReference>
<dbReference type="SUPFAM" id="SSF52540">
    <property type="entry name" value="P-loop containing nucleoside triphosphate hydrolases"/>
    <property type="match status" value="1"/>
</dbReference>
<dbReference type="PROSITE" id="PS50893">
    <property type="entry name" value="ABC_TRANSPORTER_2"/>
    <property type="match status" value="1"/>
</dbReference>
<proteinExistence type="inferred from homology"/>
<protein>
    <recommendedName>
        <fullName>Protein McbF</fullName>
    </recommendedName>
</protein>
<reference key="1">
    <citation type="journal article" date="1988" name="EMBO J.">
        <title>The export of the DNA replication inhibitor microcin B17 provides immunity for the host cell.</title>
        <authorList>
            <person name="Garrido M.D.C."/>
            <person name="Herrero M."/>
            <person name="Kolter R."/>
            <person name="Moreno F."/>
        </authorList>
    </citation>
    <scope>NUCLEOTIDE SEQUENCE [GENOMIC DNA]</scope>
</reference>
<evidence type="ECO:0000255" key="1">
    <source>
        <dbReference type="PROSITE-ProRule" id="PRU00434"/>
    </source>
</evidence>
<evidence type="ECO:0000305" key="2"/>
<feature type="chain" id="PRO_0000092489" description="Protein McbF">
    <location>
        <begin position="1"/>
        <end position="247"/>
    </location>
</feature>
<feature type="domain" description="ABC transporter" evidence="1">
    <location>
        <begin position="6"/>
        <end position="234"/>
    </location>
</feature>
<feature type="binding site" evidence="1">
    <location>
        <begin position="40"/>
        <end position="47"/>
    </location>
    <ligand>
        <name>ATP</name>
        <dbReference type="ChEBI" id="CHEBI:30616"/>
    </ligand>
</feature>
<organism>
    <name type="scientific">Escherichia coli</name>
    <dbReference type="NCBI Taxonomy" id="562"/>
    <lineage>
        <taxon>Bacteria</taxon>
        <taxon>Pseudomonadati</taxon>
        <taxon>Pseudomonadota</taxon>
        <taxon>Gammaproteobacteria</taxon>
        <taxon>Enterobacterales</taxon>
        <taxon>Enterobacteriaceae</taxon>
        <taxon>Escherichia</taxon>
    </lineage>
</organism>
<name>MCBF_ECOLX</name>
<gene>
    <name type="primary">mcbF</name>
</gene>
<accession>P05529</accession>